<accession>B1L8F3</accession>
<sequence>MRFYIKTFGCQMNENDSETMAGLLMKEGFTPASAPEEADVVIINTCAVRRKSEEKAYSELGQMLKIKRKRKLVVGVAGCVAEKEREKLLERGADFVLGTRAVLKVTEAVKRALQGEKVALFEDHLDEYTHELPRIRSSKHHAWVTIIFGCDRFCTYCIVPYTRGREKSRPMEDILEEVRELAKQGYREVTFLGQNVDAYGKDLKDGSSLAKLLEEASKIEGIERIWFLTSYPTDFSDELIEVIARNPKVAKSVHLPVQSGSNRILKLMNRSYTKEEYLALLERIRSKVPDVAISSDIIVGFPTETEEDFMETIDLVEKAQFERLNLAIYSPRKGTVAWKHYKDEVPYEEKVRRMQFLMNLQKRINRKLNERYKGKTVRVIVEAQAKNGLFYGRDIRNKIIAFEGEEWMIGRFADVKIEKITAGPLYGKVVWIEETPSPVSTDK</sequence>
<gene>
    <name evidence="1" type="primary">miaB</name>
    <name type="ordered locus">TRQ2_0276</name>
</gene>
<feature type="chain" id="PRO_0000374616" description="tRNA-2-methylthio-N(6)-dimethylallyladenosine synthase">
    <location>
        <begin position="1"/>
        <end position="443"/>
    </location>
</feature>
<feature type="domain" description="MTTase N-terminal" evidence="1">
    <location>
        <begin position="1"/>
        <end position="114"/>
    </location>
</feature>
<feature type="domain" description="Radical SAM core" evidence="2">
    <location>
        <begin position="136"/>
        <end position="367"/>
    </location>
</feature>
<feature type="domain" description="TRAM" evidence="1">
    <location>
        <begin position="370"/>
        <end position="431"/>
    </location>
</feature>
<feature type="binding site" evidence="1">
    <location>
        <position position="10"/>
    </location>
    <ligand>
        <name>[4Fe-4S] cluster</name>
        <dbReference type="ChEBI" id="CHEBI:49883"/>
        <label>1</label>
    </ligand>
</feature>
<feature type="binding site" evidence="1">
    <location>
        <position position="46"/>
    </location>
    <ligand>
        <name>[4Fe-4S] cluster</name>
        <dbReference type="ChEBI" id="CHEBI:49883"/>
        <label>1</label>
    </ligand>
</feature>
<feature type="binding site" evidence="1">
    <location>
        <position position="79"/>
    </location>
    <ligand>
        <name>[4Fe-4S] cluster</name>
        <dbReference type="ChEBI" id="CHEBI:49883"/>
        <label>1</label>
    </ligand>
</feature>
<feature type="binding site" evidence="1">
    <location>
        <position position="150"/>
    </location>
    <ligand>
        <name>[4Fe-4S] cluster</name>
        <dbReference type="ChEBI" id="CHEBI:49883"/>
        <label>2</label>
        <note>4Fe-4S-S-AdoMet</note>
    </ligand>
</feature>
<feature type="binding site" evidence="1">
    <location>
        <position position="154"/>
    </location>
    <ligand>
        <name>[4Fe-4S] cluster</name>
        <dbReference type="ChEBI" id="CHEBI:49883"/>
        <label>2</label>
        <note>4Fe-4S-S-AdoMet</note>
    </ligand>
</feature>
<feature type="binding site" evidence="1">
    <location>
        <position position="157"/>
    </location>
    <ligand>
        <name>[4Fe-4S] cluster</name>
        <dbReference type="ChEBI" id="CHEBI:49883"/>
        <label>2</label>
        <note>4Fe-4S-S-AdoMet</note>
    </ligand>
</feature>
<reference key="1">
    <citation type="journal article" date="2011" name="J. Bacteriol.">
        <title>Genome sequence of Thermotoga sp. strain RQ2, a hyperthermophilic bacterium isolated from a geothermally heated region of the seafloor near Ribeira Quente, the Azores.</title>
        <authorList>
            <person name="Swithers K.S."/>
            <person name="DiPippo J.L."/>
            <person name="Bruce D.C."/>
            <person name="Detter C."/>
            <person name="Tapia R."/>
            <person name="Han S."/>
            <person name="Saunders E."/>
            <person name="Goodwin L.A."/>
            <person name="Han J."/>
            <person name="Woyke T."/>
            <person name="Pitluck S."/>
            <person name="Pennacchio L."/>
            <person name="Nolan M."/>
            <person name="Mikhailova N."/>
            <person name="Lykidis A."/>
            <person name="Land M.L."/>
            <person name="Brettin T."/>
            <person name="Stetter K.O."/>
            <person name="Nelson K.E."/>
            <person name="Gogarten J.P."/>
            <person name="Noll K.M."/>
        </authorList>
    </citation>
    <scope>NUCLEOTIDE SEQUENCE [LARGE SCALE GENOMIC DNA]</scope>
    <source>
        <strain>RQ2</strain>
    </source>
</reference>
<proteinExistence type="inferred from homology"/>
<name>MIAB_THESQ</name>
<evidence type="ECO:0000255" key="1">
    <source>
        <dbReference type="HAMAP-Rule" id="MF_01864"/>
    </source>
</evidence>
<evidence type="ECO:0000255" key="2">
    <source>
        <dbReference type="PROSITE-ProRule" id="PRU01266"/>
    </source>
</evidence>
<comment type="function">
    <text evidence="1">Catalyzes the methylthiolation of N6-(dimethylallyl)adenosine (i(6)A), leading to the formation of 2-methylthio-N6-(dimethylallyl)adenosine (ms(2)i(6)A) at position 37 in tRNAs that read codons beginning with uridine.</text>
</comment>
<comment type="catalytic activity">
    <reaction evidence="1">
        <text>N(6)-dimethylallyladenosine(37) in tRNA + (sulfur carrier)-SH + AH2 + 2 S-adenosyl-L-methionine = 2-methylsulfanyl-N(6)-dimethylallyladenosine(37) in tRNA + (sulfur carrier)-H + 5'-deoxyadenosine + L-methionine + A + S-adenosyl-L-homocysteine + 2 H(+)</text>
        <dbReference type="Rhea" id="RHEA:37067"/>
        <dbReference type="Rhea" id="RHEA-COMP:10375"/>
        <dbReference type="Rhea" id="RHEA-COMP:10376"/>
        <dbReference type="Rhea" id="RHEA-COMP:14737"/>
        <dbReference type="Rhea" id="RHEA-COMP:14739"/>
        <dbReference type="ChEBI" id="CHEBI:13193"/>
        <dbReference type="ChEBI" id="CHEBI:15378"/>
        <dbReference type="ChEBI" id="CHEBI:17319"/>
        <dbReference type="ChEBI" id="CHEBI:17499"/>
        <dbReference type="ChEBI" id="CHEBI:29917"/>
        <dbReference type="ChEBI" id="CHEBI:57844"/>
        <dbReference type="ChEBI" id="CHEBI:57856"/>
        <dbReference type="ChEBI" id="CHEBI:59789"/>
        <dbReference type="ChEBI" id="CHEBI:64428"/>
        <dbReference type="ChEBI" id="CHEBI:74415"/>
        <dbReference type="ChEBI" id="CHEBI:74417"/>
        <dbReference type="EC" id="2.8.4.3"/>
    </reaction>
</comment>
<comment type="cofactor">
    <cofactor evidence="1">
        <name>[4Fe-4S] cluster</name>
        <dbReference type="ChEBI" id="CHEBI:49883"/>
    </cofactor>
    <text evidence="1">Binds 2 [4Fe-4S] clusters. One cluster is coordinated with 3 cysteines and an exchangeable S-adenosyl-L-methionine.</text>
</comment>
<comment type="subunit">
    <text evidence="1">Monomer.</text>
</comment>
<comment type="subcellular location">
    <subcellularLocation>
        <location evidence="1">Cytoplasm</location>
    </subcellularLocation>
</comment>
<comment type="similarity">
    <text evidence="1">Belongs to the methylthiotransferase family. MiaB subfamily.</text>
</comment>
<keyword id="KW-0004">4Fe-4S</keyword>
<keyword id="KW-0963">Cytoplasm</keyword>
<keyword id="KW-0408">Iron</keyword>
<keyword id="KW-0411">Iron-sulfur</keyword>
<keyword id="KW-0479">Metal-binding</keyword>
<keyword id="KW-0949">S-adenosyl-L-methionine</keyword>
<keyword id="KW-0808">Transferase</keyword>
<keyword id="KW-0819">tRNA processing</keyword>
<dbReference type="EC" id="2.8.4.3" evidence="1"/>
<dbReference type="EMBL" id="CP000969">
    <property type="protein sequence ID" value="ACB08635.1"/>
    <property type="molecule type" value="Genomic_DNA"/>
</dbReference>
<dbReference type="RefSeq" id="WP_011942945.1">
    <property type="nucleotide sequence ID" value="NC_010483.1"/>
</dbReference>
<dbReference type="SMR" id="B1L8F3"/>
<dbReference type="KEGG" id="trq:TRQ2_0276"/>
<dbReference type="HOGENOM" id="CLU_018697_2_2_0"/>
<dbReference type="Proteomes" id="UP000001687">
    <property type="component" value="Chromosome"/>
</dbReference>
<dbReference type="GO" id="GO:0005829">
    <property type="term" value="C:cytosol"/>
    <property type="evidence" value="ECO:0007669"/>
    <property type="project" value="TreeGrafter"/>
</dbReference>
<dbReference type="GO" id="GO:0051539">
    <property type="term" value="F:4 iron, 4 sulfur cluster binding"/>
    <property type="evidence" value="ECO:0007669"/>
    <property type="project" value="UniProtKB-UniRule"/>
</dbReference>
<dbReference type="GO" id="GO:0046872">
    <property type="term" value="F:metal ion binding"/>
    <property type="evidence" value="ECO:0007669"/>
    <property type="project" value="UniProtKB-KW"/>
</dbReference>
<dbReference type="GO" id="GO:0035597">
    <property type="term" value="F:N6-isopentenyladenosine methylthiotransferase activity"/>
    <property type="evidence" value="ECO:0007669"/>
    <property type="project" value="TreeGrafter"/>
</dbReference>
<dbReference type="CDD" id="cd01335">
    <property type="entry name" value="Radical_SAM"/>
    <property type="match status" value="1"/>
</dbReference>
<dbReference type="FunFam" id="3.40.50.12160:FF:000003">
    <property type="entry name" value="CDK5 regulatory subunit-associated protein 1"/>
    <property type="match status" value="1"/>
</dbReference>
<dbReference type="FunFam" id="3.80.30.20:FF:000001">
    <property type="entry name" value="tRNA-2-methylthio-N(6)-dimethylallyladenosine synthase 2"/>
    <property type="match status" value="1"/>
</dbReference>
<dbReference type="Gene3D" id="3.40.50.12160">
    <property type="entry name" value="Methylthiotransferase, N-terminal domain"/>
    <property type="match status" value="1"/>
</dbReference>
<dbReference type="Gene3D" id="3.80.30.20">
    <property type="entry name" value="tm_1862 like domain"/>
    <property type="match status" value="1"/>
</dbReference>
<dbReference type="HAMAP" id="MF_01864">
    <property type="entry name" value="tRNA_metthiotr_MiaB"/>
    <property type="match status" value="1"/>
</dbReference>
<dbReference type="InterPro" id="IPR006638">
    <property type="entry name" value="Elp3/MiaA/NifB-like_rSAM"/>
</dbReference>
<dbReference type="InterPro" id="IPR005839">
    <property type="entry name" value="Methylthiotransferase"/>
</dbReference>
<dbReference type="InterPro" id="IPR020612">
    <property type="entry name" value="Methylthiotransferase_CS"/>
</dbReference>
<dbReference type="InterPro" id="IPR013848">
    <property type="entry name" value="Methylthiotransferase_N"/>
</dbReference>
<dbReference type="InterPro" id="IPR038135">
    <property type="entry name" value="Methylthiotransferase_N_sf"/>
</dbReference>
<dbReference type="InterPro" id="IPR006463">
    <property type="entry name" value="MiaB_methiolase"/>
</dbReference>
<dbReference type="InterPro" id="IPR007197">
    <property type="entry name" value="rSAM"/>
</dbReference>
<dbReference type="InterPro" id="IPR023404">
    <property type="entry name" value="rSAM_horseshoe"/>
</dbReference>
<dbReference type="InterPro" id="IPR002792">
    <property type="entry name" value="TRAM_dom"/>
</dbReference>
<dbReference type="NCBIfam" id="TIGR01574">
    <property type="entry name" value="miaB-methiolase"/>
    <property type="match status" value="1"/>
</dbReference>
<dbReference type="NCBIfam" id="TIGR00089">
    <property type="entry name" value="MiaB/RimO family radical SAM methylthiotransferase"/>
    <property type="match status" value="1"/>
</dbReference>
<dbReference type="PANTHER" id="PTHR43020">
    <property type="entry name" value="CDK5 REGULATORY SUBUNIT-ASSOCIATED PROTEIN 1"/>
    <property type="match status" value="1"/>
</dbReference>
<dbReference type="PANTHER" id="PTHR43020:SF2">
    <property type="entry name" value="MITOCHONDRIAL TRNA METHYLTHIOTRANSFERASE CDK5RAP1"/>
    <property type="match status" value="1"/>
</dbReference>
<dbReference type="Pfam" id="PF04055">
    <property type="entry name" value="Radical_SAM"/>
    <property type="match status" value="1"/>
</dbReference>
<dbReference type="Pfam" id="PF01938">
    <property type="entry name" value="TRAM"/>
    <property type="match status" value="1"/>
</dbReference>
<dbReference type="Pfam" id="PF00919">
    <property type="entry name" value="UPF0004"/>
    <property type="match status" value="1"/>
</dbReference>
<dbReference type="SFLD" id="SFLDF00273">
    <property type="entry name" value="(dimethylallyl)adenosine_tRNA"/>
    <property type="match status" value="1"/>
</dbReference>
<dbReference type="SFLD" id="SFLDG01082">
    <property type="entry name" value="B12-binding_domain_containing"/>
    <property type="match status" value="1"/>
</dbReference>
<dbReference type="SFLD" id="SFLDG01061">
    <property type="entry name" value="methylthiotransferase"/>
    <property type="match status" value="1"/>
</dbReference>
<dbReference type="SMART" id="SM00729">
    <property type="entry name" value="Elp3"/>
    <property type="match status" value="1"/>
</dbReference>
<dbReference type="SUPFAM" id="SSF102114">
    <property type="entry name" value="Radical SAM enzymes"/>
    <property type="match status" value="1"/>
</dbReference>
<dbReference type="PROSITE" id="PS51449">
    <property type="entry name" value="MTTASE_N"/>
    <property type="match status" value="1"/>
</dbReference>
<dbReference type="PROSITE" id="PS01278">
    <property type="entry name" value="MTTASE_RADICAL"/>
    <property type="match status" value="1"/>
</dbReference>
<dbReference type="PROSITE" id="PS51918">
    <property type="entry name" value="RADICAL_SAM"/>
    <property type="match status" value="1"/>
</dbReference>
<dbReference type="PROSITE" id="PS50926">
    <property type="entry name" value="TRAM"/>
    <property type="match status" value="1"/>
</dbReference>
<organism>
    <name type="scientific">Thermotoga sp. (strain RQ2)</name>
    <dbReference type="NCBI Taxonomy" id="126740"/>
    <lineage>
        <taxon>Bacteria</taxon>
        <taxon>Thermotogati</taxon>
        <taxon>Thermotogota</taxon>
        <taxon>Thermotogae</taxon>
        <taxon>Thermotogales</taxon>
        <taxon>Thermotogaceae</taxon>
        <taxon>Thermotoga</taxon>
    </lineage>
</organism>
<protein>
    <recommendedName>
        <fullName evidence="1">tRNA-2-methylthio-N(6)-dimethylallyladenosine synthase</fullName>
        <ecNumber evidence="1">2.8.4.3</ecNumber>
    </recommendedName>
    <alternativeName>
        <fullName evidence="1">(Dimethylallyl)adenosine tRNA methylthiotransferase MiaB</fullName>
    </alternativeName>
    <alternativeName>
        <fullName evidence="1">tRNA-i(6)A37 methylthiotransferase</fullName>
    </alternativeName>
</protein>